<evidence type="ECO:0000250" key="1"/>
<evidence type="ECO:0000250" key="2">
    <source>
        <dbReference type="UniProtKB" id="P57073"/>
    </source>
</evidence>
<evidence type="ECO:0000255" key="3">
    <source>
        <dbReference type="PROSITE-ProRule" id="PRU00267"/>
    </source>
</evidence>
<evidence type="ECO:0000256" key="4">
    <source>
        <dbReference type="SAM" id="MobiDB-lite"/>
    </source>
</evidence>
<evidence type="ECO:0000305" key="5"/>
<gene>
    <name type="primary">sox8</name>
    <name type="ORF">GSTENG00018540001</name>
</gene>
<dbReference type="EMBL" id="AY612092">
    <property type="protein sequence ID" value="AAT42231.1"/>
    <property type="molecule type" value="mRNA"/>
</dbReference>
<dbReference type="EMBL" id="CAAE01014593">
    <property type="protein sequence ID" value="CAG00190.1"/>
    <property type="status" value="ALT_SEQ"/>
    <property type="molecule type" value="Genomic_DNA"/>
</dbReference>
<dbReference type="SMR" id="Q6IZ48"/>
<dbReference type="FunCoup" id="Q6IZ48">
    <property type="interactions" value="19"/>
</dbReference>
<dbReference type="STRING" id="99883.ENSTNIP00000012643"/>
<dbReference type="KEGG" id="tng:GSTEN00018540G001"/>
<dbReference type="HOGENOM" id="CLU_031800_0_0_1"/>
<dbReference type="InParanoid" id="Q6IZ48"/>
<dbReference type="OrthoDB" id="6247875at2759"/>
<dbReference type="Proteomes" id="UP000007303">
    <property type="component" value="Unassembled WGS sequence"/>
</dbReference>
<dbReference type="GO" id="GO:0005634">
    <property type="term" value="C:nucleus"/>
    <property type="evidence" value="ECO:0007669"/>
    <property type="project" value="UniProtKB-SubCell"/>
</dbReference>
<dbReference type="GO" id="GO:0000981">
    <property type="term" value="F:DNA-binding transcription factor activity, RNA polymerase II-specific"/>
    <property type="evidence" value="ECO:0007669"/>
    <property type="project" value="TreeGrafter"/>
</dbReference>
<dbReference type="GO" id="GO:0000978">
    <property type="term" value="F:RNA polymerase II cis-regulatory region sequence-specific DNA binding"/>
    <property type="evidence" value="ECO:0007669"/>
    <property type="project" value="TreeGrafter"/>
</dbReference>
<dbReference type="GO" id="GO:0002009">
    <property type="term" value="P:morphogenesis of an epithelium"/>
    <property type="evidence" value="ECO:0007669"/>
    <property type="project" value="TreeGrafter"/>
</dbReference>
<dbReference type="GO" id="GO:0000122">
    <property type="term" value="P:negative regulation of transcription by RNA polymerase II"/>
    <property type="evidence" value="ECO:0007669"/>
    <property type="project" value="TreeGrafter"/>
</dbReference>
<dbReference type="GO" id="GO:0014032">
    <property type="term" value="P:neural crest cell development"/>
    <property type="evidence" value="ECO:0007669"/>
    <property type="project" value="TreeGrafter"/>
</dbReference>
<dbReference type="CDD" id="cd22031">
    <property type="entry name" value="HMG-box_SoxE"/>
    <property type="match status" value="1"/>
</dbReference>
<dbReference type="FunFam" id="1.10.30.10:FF:000004">
    <property type="entry name" value="Transcription factor SOX-10"/>
    <property type="match status" value="1"/>
</dbReference>
<dbReference type="Gene3D" id="1.10.30.10">
    <property type="entry name" value="High mobility group box domain"/>
    <property type="match status" value="1"/>
</dbReference>
<dbReference type="InterPro" id="IPR009071">
    <property type="entry name" value="HMG_box_dom"/>
</dbReference>
<dbReference type="InterPro" id="IPR036910">
    <property type="entry name" value="HMG_box_dom_sf"/>
</dbReference>
<dbReference type="InterPro" id="IPR022151">
    <property type="entry name" value="Sox_N"/>
</dbReference>
<dbReference type="InterPro" id="IPR050917">
    <property type="entry name" value="SOX_TF"/>
</dbReference>
<dbReference type="PANTHER" id="PTHR45803">
    <property type="entry name" value="SOX100B"/>
    <property type="match status" value="1"/>
</dbReference>
<dbReference type="PANTHER" id="PTHR45803:SF2">
    <property type="entry name" value="TRANSCRIPTION FACTOR SOX-8"/>
    <property type="match status" value="1"/>
</dbReference>
<dbReference type="Pfam" id="PF00505">
    <property type="entry name" value="HMG_box"/>
    <property type="match status" value="1"/>
</dbReference>
<dbReference type="Pfam" id="PF12444">
    <property type="entry name" value="Sox_N"/>
    <property type="match status" value="1"/>
</dbReference>
<dbReference type="SMART" id="SM00398">
    <property type="entry name" value="HMG"/>
    <property type="match status" value="1"/>
</dbReference>
<dbReference type="SUPFAM" id="SSF47095">
    <property type="entry name" value="HMG-box"/>
    <property type="match status" value="1"/>
</dbReference>
<dbReference type="PROSITE" id="PS50118">
    <property type="entry name" value="HMG_BOX_2"/>
    <property type="match status" value="1"/>
</dbReference>
<organism>
    <name type="scientific">Tetraodon nigroviridis</name>
    <name type="common">Spotted green pufferfish</name>
    <name type="synonym">Chelonodon nigroviridis</name>
    <dbReference type="NCBI Taxonomy" id="99883"/>
    <lineage>
        <taxon>Eukaryota</taxon>
        <taxon>Metazoa</taxon>
        <taxon>Chordata</taxon>
        <taxon>Craniata</taxon>
        <taxon>Vertebrata</taxon>
        <taxon>Euteleostomi</taxon>
        <taxon>Actinopterygii</taxon>
        <taxon>Neopterygii</taxon>
        <taxon>Teleostei</taxon>
        <taxon>Neoteleostei</taxon>
        <taxon>Acanthomorphata</taxon>
        <taxon>Eupercaria</taxon>
        <taxon>Tetraodontiformes</taxon>
        <taxon>Tetradontoidea</taxon>
        <taxon>Tetraodontidae</taxon>
        <taxon>Tetraodon</taxon>
    </lineage>
</organism>
<name>SOX8_TETNG</name>
<protein>
    <recommendedName>
        <fullName>Transcription factor Sox-8</fullName>
    </recommendedName>
</protein>
<reference key="1">
    <citation type="submission" date="2004-04" db="EMBL/GenBank/DDBJ databases">
        <title>Cloning and characterization of the transcription factor Sox 8 in the fresh water pufferfish Tetraodon nigroviridis.</title>
        <authorList>
            <person name="MacKenzie M.G."/>
            <person name="Fernandes J.M.O."/>
            <person name="Johnston I.A."/>
            <person name="Kinghorn J.R."/>
        </authorList>
    </citation>
    <scope>NUCLEOTIDE SEQUENCE [MRNA]</scope>
</reference>
<reference key="2">
    <citation type="journal article" date="2004" name="Nature">
        <title>Genome duplication in the teleost fish Tetraodon nigroviridis reveals the early vertebrate proto-karyotype.</title>
        <authorList>
            <person name="Jaillon O."/>
            <person name="Aury J.-M."/>
            <person name="Brunet F."/>
            <person name="Petit J.-L."/>
            <person name="Stange-Thomann N."/>
            <person name="Mauceli E."/>
            <person name="Bouneau L."/>
            <person name="Fischer C."/>
            <person name="Ozouf-Costaz C."/>
            <person name="Bernot A."/>
            <person name="Nicaud S."/>
            <person name="Jaffe D."/>
            <person name="Fisher S."/>
            <person name="Lutfalla G."/>
            <person name="Dossat C."/>
            <person name="Segurens B."/>
            <person name="Dasilva C."/>
            <person name="Salanoubat M."/>
            <person name="Levy M."/>
            <person name="Boudet N."/>
            <person name="Castellano S."/>
            <person name="Anthouard V."/>
            <person name="Jubin C."/>
            <person name="Castelli V."/>
            <person name="Katinka M."/>
            <person name="Vacherie B."/>
            <person name="Biemont C."/>
            <person name="Skalli Z."/>
            <person name="Cattolico L."/>
            <person name="Poulain J."/>
            <person name="De Berardinis V."/>
            <person name="Cruaud C."/>
            <person name="Duprat S."/>
            <person name="Brottier P."/>
            <person name="Coutanceau J.-P."/>
            <person name="Gouzy J."/>
            <person name="Parra G."/>
            <person name="Lardier G."/>
            <person name="Chapple C."/>
            <person name="McKernan K.J."/>
            <person name="McEwan P."/>
            <person name="Bosak S."/>
            <person name="Kellis M."/>
            <person name="Volff J.-N."/>
            <person name="Guigo R."/>
            <person name="Zody M.C."/>
            <person name="Mesirov J."/>
            <person name="Lindblad-Toh K."/>
            <person name="Birren B."/>
            <person name="Nusbaum C."/>
            <person name="Kahn D."/>
            <person name="Robinson-Rechavi M."/>
            <person name="Laudet V."/>
            <person name="Schachter V."/>
            <person name="Quetier F."/>
            <person name="Saurin W."/>
            <person name="Scarpelli C."/>
            <person name="Wincker P."/>
            <person name="Lander E.S."/>
            <person name="Weissenbach J."/>
            <person name="Roest Crollius H."/>
        </authorList>
    </citation>
    <scope>NUCLEOTIDE SEQUENCE [LARGE SCALE GENOMIC DNA]</scope>
</reference>
<sequence length="462" mass="50712">MLKMTEEHDKCVSDQPCSPSGTNSSMSQDESDSDAPSSPTGSDGQGSLLTSLGRKVDSEDDERFPACIRDAVSQVLKGYDWSLVPMPVRGNGSLKNKPHVKRPMNAFMVWAQAARRKLADQYPHLHNAELSKTLGKLWRLLSESEKRPFVDEAERLRIQHKKDHPDYKYQPRRRKNVKPGQSDSDSGAELAHHMYKAEPGMGGMGGITDAHHHAEHAGQPHGPPTPPTTPKTDLHHGAKQDLKHEGRRLIDSSRQNIDFSNVDISELSTDVISNMETFDVHEFDQYLPLNGHTSSSSSLPSDQPPAPVSSYASSYGHAGVNGPAWSRKGAMPSSSPSSGEVGQHRLHIKTEQLSPSHYSEHSHRSPPHSDYGSYSSPACVTSATSAASVPFSGSQCDYSDIQSSNYYNPYSSYSSSLYQYPYFHSSRRPYGSPILNSLSMAPAHSPTGSGWDQPVYTTLSRP</sequence>
<keyword id="KW-0238">DNA-binding</keyword>
<keyword id="KW-0539">Nucleus</keyword>
<keyword id="KW-1185">Reference proteome</keyword>
<keyword id="KW-0804">Transcription</keyword>
<keyword id="KW-0805">Transcription regulation</keyword>
<proteinExistence type="evidence at transcript level"/>
<accession>Q6IZ48</accession>
<accession>Q4SGP2</accession>
<comment type="function">
    <text evidence="1">May play a role in central nervous system, limb and facial development. May be involved in male sex determination. Binds the consensus motif 5'-[AT][AT]CAA[AT]G-3' (By similarity).</text>
</comment>
<comment type="subcellular location">
    <subcellularLocation>
        <location evidence="3">Nucleus</location>
    </subcellularLocation>
</comment>
<comment type="domain">
    <text evidence="2">The 9aaTAD motif is a transactivation domain present in a large number of yeast and animal transcription factors.</text>
</comment>
<comment type="sequence caution" evidence="5">
    <conflict type="erroneous gene model prediction">
        <sequence resource="EMBL-CDS" id="CAG00190"/>
    </conflict>
</comment>
<feature type="chain" id="PRO_0000048736" description="Transcription factor Sox-8">
    <location>
        <begin position="1"/>
        <end position="462"/>
    </location>
</feature>
<feature type="DNA-binding region" description="HMG box" evidence="3">
    <location>
        <begin position="100"/>
        <end position="168"/>
    </location>
</feature>
<feature type="region of interest" description="Disordered" evidence="4">
    <location>
        <begin position="1"/>
        <end position="57"/>
    </location>
</feature>
<feature type="region of interest" description="Disordered" evidence="4">
    <location>
        <begin position="155"/>
        <end position="243"/>
    </location>
</feature>
<feature type="region of interest" description="Disordered" evidence="4">
    <location>
        <begin position="291"/>
        <end position="375"/>
    </location>
</feature>
<feature type="region of interest" description="Disordered" evidence="4">
    <location>
        <begin position="442"/>
        <end position="462"/>
    </location>
</feature>
<feature type="short sequence motif" description="9aaTAD" evidence="2">
    <location>
        <begin position="415"/>
        <end position="423"/>
    </location>
</feature>
<feature type="compositionally biased region" description="Basic and acidic residues" evidence="4">
    <location>
        <begin position="1"/>
        <end position="12"/>
    </location>
</feature>
<feature type="compositionally biased region" description="Polar residues" evidence="4">
    <location>
        <begin position="15"/>
        <end position="50"/>
    </location>
</feature>
<feature type="compositionally biased region" description="Basic and acidic residues" evidence="4">
    <location>
        <begin position="155"/>
        <end position="169"/>
    </location>
</feature>
<feature type="compositionally biased region" description="Basic and acidic residues" evidence="4">
    <location>
        <begin position="209"/>
        <end position="218"/>
    </location>
</feature>
<feature type="compositionally biased region" description="Basic and acidic residues" evidence="4">
    <location>
        <begin position="232"/>
        <end position="243"/>
    </location>
</feature>
<feature type="compositionally biased region" description="Polar residues" evidence="4">
    <location>
        <begin position="446"/>
        <end position="462"/>
    </location>
</feature>
<feature type="sequence conflict" description="In Ref. 1; AAT42231." evidence="5" ref="1">
    <original>T</original>
    <variation>A</variation>
    <location>
        <position position="133"/>
    </location>
</feature>
<feature type="sequence conflict" description="In Ref. 1; AAT42231." evidence="5" ref="1">
    <original>N</original>
    <variation>S</variation>
    <location>
        <position position="274"/>
    </location>
</feature>
<feature type="sequence conflict" description="In Ref. 1; AAT42231." evidence="5" ref="1">
    <original>S</original>
    <variation>P</variation>
    <location>
        <position position="338"/>
    </location>
</feature>